<name>CLPP_CHLL3</name>
<gene>
    <name evidence="1" type="primary">clpP</name>
    <name type="ordered locus">Plut_0385</name>
</gene>
<organism>
    <name type="scientific">Chlorobium luteolum (strain DSM 273 / BCRC 81028 / 2530)</name>
    <name type="common">Pelodictyon luteolum</name>
    <dbReference type="NCBI Taxonomy" id="319225"/>
    <lineage>
        <taxon>Bacteria</taxon>
        <taxon>Pseudomonadati</taxon>
        <taxon>Chlorobiota</taxon>
        <taxon>Chlorobiia</taxon>
        <taxon>Chlorobiales</taxon>
        <taxon>Chlorobiaceae</taxon>
        <taxon>Chlorobium/Pelodictyon group</taxon>
        <taxon>Pelodictyon</taxon>
    </lineage>
</organism>
<sequence>MANINFGFEHHASKLYSGAIEQGIQNSLVPMVIETSGRGERAFDIFSRLLRERIIFLGSGIDEHVAGLIMAQLIFLESEDPERDIYIYVNSPGGSVSAGLGIYDTMQYIRPDVSTVCVGMAASMGAFLLASGAKGKRASLPHSRIMIHQPSGGAQGQESDIIIQAREIEKIRRLLEEILASHTGKDVQQVREDSERDRWMNAEEALDYGIIDQVFAKRPAPEKKD</sequence>
<feature type="chain" id="PRO_0000236397" description="ATP-dependent Clp protease proteolytic subunit">
    <location>
        <begin position="1"/>
        <end position="225"/>
    </location>
</feature>
<feature type="active site" description="Nucleophile" evidence="1">
    <location>
        <position position="123"/>
    </location>
</feature>
<feature type="active site" evidence="1">
    <location>
        <position position="148"/>
    </location>
</feature>
<evidence type="ECO:0000255" key="1">
    <source>
        <dbReference type="HAMAP-Rule" id="MF_00444"/>
    </source>
</evidence>
<accession>Q3B5V8</accession>
<reference key="1">
    <citation type="submission" date="2005-08" db="EMBL/GenBank/DDBJ databases">
        <title>Complete sequence of Pelodictyon luteolum DSM 273.</title>
        <authorList>
            <consortium name="US DOE Joint Genome Institute"/>
            <person name="Copeland A."/>
            <person name="Lucas S."/>
            <person name="Lapidus A."/>
            <person name="Barry K."/>
            <person name="Detter J.C."/>
            <person name="Glavina T."/>
            <person name="Hammon N."/>
            <person name="Israni S."/>
            <person name="Pitluck S."/>
            <person name="Bryant D."/>
            <person name="Schmutz J."/>
            <person name="Larimer F."/>
            <person name="Land M."/>
            <person name="Kyrpides N."/>
            <person name="Ivanova N."/>
            <person name="Richardson P."/>
        </authorList>
    </citation>
    <scope>NUCLEOTIDE SEQUENCE [LARGE SCALE GENOMIC DNA]</scope>
    <source>
        <strain>DSM 273 / BCRC 81028 / 2530</strain>
    </source>
</reference>
<protein>
    <recommendedName>
        <fullName evidence="1">ATP-dependent Clp protease proteolytic subunit</fullName>
        <ecNumber evidence="1">3.4.21.92</ecNumber>
    </recommendedName>
    <alternativeName>
        <fullName evidence="1">Endopeptidase Clp</fullName>
    </alternativeName>
</protein>
<proteinExistence type="inferred from homology"/>
<dbReference type="EC" id="3.4.21.92" evidence="1"/>
<dbReference type="EMBL" id="CP000096">
    <property type="protein sequence ID" value="ABB23273.1"/>
    <property type="molecule type" value="Genomic_DNA"/>
</dbReference>
<dbReference type="RefSeq" id="WP_011357148.1">
    <property type="nucleotide sequence ID" value="NC_007512.1"/>
</dbReference>
<dbReference type="SMR" id="Q3B5V8"/>
<dbReference type="STRING" id="319225.Plut_0385"/>
<dbReference type="MEROPS" id="S14.001"/>
<dbReference type="KEGG" id="plt:Plut_0385"/>
<dbReference type="eggNOG" id="COG0740">
    <property type="taxonomic scope" value="Bacteria"/>
</dbReference>
<dbReference type="HOGENOM" id="CLU_058707_3_2_10"/>
<dbReference type="OrthoDB" id="9802800at2"/>
<dbReference type="Proteomes" id="UP000002709">
    <property type="component" value="Chromosome"/>
</dbReference>
<dbReference type="GO" id="GO:0005737">
    <property type="term" value="C:cytoplasm"/>
    <property type="evidence" value="ECO:0007669"/>
    <property type="project" value="UniProtKB-SubCell"/>
</dbReference>
<dbReference type="GO" id="GO:0009368">
    <property type="term" value="C:endopeptidase Clp complex"/>
    <property type="evidence" value="ECO:0007669"/>
    <property type="project" value="TreeGrafter"/>
</dbReference>
<dbReference type="GO" id="GO:0004176">
    <property type="term" value="F:ATP-dependent peptidase activity"/>
    <property type="evidence" value="ECO:0007669"/>
    <property type="project" value="InterPro"/>
</dbReference>
<dbReference type="GO" id="GO:0051117">
    <property type="term" value="F:ATPase binding"/>
    <property type="evidence" value="ECO:0007669"/>
    <property type="project" value="TreeGrafter"/>
</dbReference>
<dbReference type="GO" id="GO:0004252">
    <property type="term" value="F:serine-type endopeptidase activity"/>
    <property type="evidence" value="ECO:0007669"/>
    <property type="project" value="UniProtKB-UniRule"/>
</dbReference>
<dbReference type="GO" id="GO:0006515">
    <property type="term" value="P:protein quality control for misfolded or incompletely synthesized proteins"/>
    <property type="evidence" value="ECO:0007669"/>
    <property type="project" value="TreeGrafter"/>
</dbReference>
<dbReference type="CDD" id="cd07017">
    <property type="entry name" value="S14_ClpP_2"/>
    <property type="match status" value="1"/>
</dbReference>
<dbReference type="FunFam" id="3.90.226.10:FF:000001">
    <property type="entry name" value="ATP-dependent Clp protease proteolytic subunit"/>
    <property type="match status" value="1"/>
</dbReference>
<dbReference type="Gene3D" id="3.90.226.10">
    <property type="entry name" value="2-enoyl-CoA Hydratase, Chain A, domain 1"/>
    <property type="match status" value="1"/>
</dbReference>
<dbReference type="HAMAP" id="MF_00444">
    <property type="entry name" value="ClpP"/>
    <property type="match status" value="1"/>
</dbReference>
<dbReference type="InterPro" id="IPR001907">
    <property type="entry name" value="ClpP"/>
</dbReference>
<dbReference type="InterPro" id="IPR029045">
    <property type="entry name" value="ClpP/crotonase-like_dom_sf"/>
</dbReference>
<dbReference type="InterPro" id="IPR023562">
    <property type="entry name" value="ClpP/TepA"/>
</dbReference>
<dbReference type="InterPro" id="IPR033135">
    <property type="entry name" value="ClpP_His_AS"/>
</dbReference>
<dbReference type="InterPro" id="IPR018215">
    <property type="entry name" value="ClpP_Ser_AS"/>
</dbReference>
<dbReference type="NCBIfam" id="TIGR00493">
    <property type="entry name" value="clpP"/>
    <property type="match status" value="1"/>
</dbReference>
<dbReference type="NCBIfam" id="NF001368">
    <property type="entry name" value="PRK00277.1"/>
    <property type="match status" value="1"/>
</dbReference>
<dbReference type="NCBIfam" id="NF009205">
    <property type="entry name" value="PRK12553.1"/>
    <property type="match status" value="1"/>
</dbReference>
<dbReference type="PANTHER" id="PTHR10381">
    <property type="entry name" value="ATP-DEPENDENT CLP PROTEASE PROTEOLYTIC SUBUNIT"/>
    <property type="match status" value="1"/>
</dbReference>
<dbReference type="PANTHER" id="PTHR10381:SF70">
    <property type="entry name" value="ATP-DEPENDENT CLP PROTEASE PROTEOLYTIC SUBUNIT"/>
    <property type="match status" value="1"/>
</dbReference>
<dbReference type="Pfam" id="PF00574">
    <property type="entry name" value="CLP_protease"/>
    <property type="match status" value="1"/>
</dbReference>
<dbReference type="PRINTS" id="PR00127">
    <property type="entry name" value="CLPPROTEASEP"/>
</dbReference>
<dbReference type="SUPFAM" id="SSF52096">
    <property type="entry name" value="ClpP/crotonase"/>
    <property type="match status" value="1"/>
</dbReference>
<dbReference type="PROSITE" id="PS00382">
    <property type="entry name" value="CLP_PROTEASE_HIS"/>
    <property type="match status" value="1"/>
</dbReference>
<dbReference type="PROSITE" id="PS00381">
    <property type="entry name" value="CLP_PROTEASE_SER"/>
    <property type="match status" value="1"/>
</dbReference>
<comment type="function">
    <text evidence="1">Cleaves peptides in various proteins in a process that requires ATP hydrolysis. Has a chymotrypsin-like activity. Plays a major role in the degradation of misfolded proteins.</text>
</comment>
<comment type="catalytic activity">
    <reaction evidence="1">
        <text>Hydrolysis of proteins to small peptides in the presence of ATP and magnesium. alpha-casein is the usual test substrate. In the absence of ATP, only oligopeptides shorter than five residues are hydrolyzed (such as succinyl-Leu-Tyr-|-NHMec, and Leu-Tyr-Leu-|-Tyr-Trp, in which cleavage of the -Tyr-|-Leu- and -Tyr-|-Trp bonds also occurs).</text>
        <dbReference type="EC" id="3.4.21.92"/>
    </reaction>
</comment>
<comment type="subunit">
    <text evidence="1">Fourteen ClpP subunits assemble into 2 heptameric rings which stack back to back to give a disk-like structure with a central cavity, resembling the structure of eukaryotic proteasomes.</text>
</comment>
<comment type="subcellular location">
    <subcellularLocation>
        <location evidence="1">Cytoplasm</location>
    </subcellularLocation>
</comment>
<comment type="similarity">
    <text evidence="1">Belongs to the peptidase S14 family.</text>
</comment>
<keyword id="KW-0963">Cytoplasm</keyword>
<keyword id="KW-0378">Hydrolase</keyword>
<keyword id="KW-0645">Protease</keyword>
<keyword id="KW-1185">Reference proteome</keyword>
<keyword id="KW-0720">Serine protease</keyword>